<evidence type="ECO:0000255" key="1">
    <source>
        <dbReference type="HAMAP-Rule" id="MF_00712"/>
    </source>
</evidence>
<feature type="chain" id="PRO_1000045637" description="Probable glycine dehydrogenase (decarboxylating) subunit 1">
    <location>
        <begin position="1"/>
        <end position="448"/>
    </location>
</feature>
<protein>
    <recommendedName>
        <fullName evidence="1">Probable glycine dehydrogenase (decarboxylating) subunit 1</fullName>
        <ecNumber evidence="1">1.4.4.2</ecNumber>
    </recommendedName>
    <alternativeName>
        <fullName evidence="1">Glycine cleavage system P-protein subunit 1</fullName>
    </alternativeName>
    <alternativeName>
        <fullName evidence="1">Glycine decarboxylase subunit 1</fullName>
    </alternativeName>
    <alternativeName>
        <fullName evidence="1">Glycine dehydrogenase (aminomethyl-transferring) subunit 1</fullName>
    </alternativeName>
</protein>
<dbReference type="EC" id="1.4.4.2" evidence="1"/>
<dbReference type="EMBL" id="CP000560">
    <property type="protein sequence ID" value="ABS74649.1"/>
    <property type="molecule type" value="Genomic_DNA"/>
</dbReference>
<dbReference type="RefSeq" id="WP_012117973.1">
    <property type="nucleotide sequence ID" value="NC_009725.2"/>
</dbReference>
<dbReference type="SMR" id="A7Z6M3"/>
<dbReference type="GeneID" id="93081426"/>
<dbReference type="KEGG" id="bay:RBAM_022880"/>
<dbReference type="HOGENOM" id="CLU_004620_0_2_9"/>
<dbReference type="Proteomes" id="UP000001120">
    <property type="component" value="Chromosome"/>
</dbReference>
<dbReference type="GO" id="GO:0004375">
    <property type="term" value="F:glycine dehydrogenase (decarboxylating) activity"/>
    <property type="evidence" value="ECO:0007669"/>
    <property type="project" value="UniProtKB-EC"/>
</dbReference>
<dbReference type="GO" id="GO:0019464">
    <property type="term" value="P:glycine decarboxylation via glycine cleavage system"/>
    <property type="evidence" value="ECO:0007669"/>
    <property type="project" value="UniProtKB-UniRule"/>
</dbReference>
<dbReference type="GO" id="GO:0009116">
    <property type="term" value="P:nucleoside metabolic process"/>
    <property type="evidence" value="ECO:0007669"/>
    <property type="project" value="InterPro"/>
</dbReference>
<dbReference type="CDD" id="cd00613">
    <property type="entry name" value="GDC-P"/>
    <property type="match status" value="1"/>
</dbReference>
<dbReference type="FunFam" id="3.40.640.10:FF:000113">
    <property type="entry name" value="Probable glycine dehydrogenase (decarboxylating) subunit 1"/>
    <property type="match status" value="1"/>
</dbReference>
<dbReference type="Gene3D" id="3.90.1150.10">
    <property type="entry name" value="Aspartate Aminotransferase, domain 1"/>
    <property type="match status" value="1"/>
</dbReference>
<dbReference type="Gene3D" id="3.40.640.10">
    <property type="entry name" value="Type I PLP-dependent aspartate aminotransferase-like (Major domain)"/>
    <property type="match status" value="1"/>
</dbReference>
<dbReference type="HAMAP" id="MF_00712">
    <property type="entry name" value="GcvPA"/>
    <property type="match status" value="1"/>
</dbReference>
<dbReference type="InterPro" id="IPR023010">
    <property type="entry name" value="GcvPA"/>
</dbReference>
<dbReference type="InterPro" id="IPR049315">
    <property type="entry name" value="GDC-P_N"/>
</dbReference>
<dbReference type="InterPro" id="IPR020581">
    <property type="entry name" value="GDC_P"/>
</dbReference>
<dbReference type="InterPro" id="IPR015424">
    <property type="entry name" value="PyrdxlP-dep_Trfase"/>
</dbReference>
<dbReference type="InterPro" id="IPR015421">
    <property type="entry name" value="PyrdxlP-dep_Trfase_major"/>
</dbReference>
<dbReference type="InterPro" id="IPR015422">
    <property type="entry name" value="PyrdxlP-dep_Trfase_small"/>
</dbReference>
<dbReference type="NCBIfam" id="NF001696">
    <property type="entry name" value="PRK00451.1"/>
    <property type="match status" value="1"/>
</dbReference>
<dbReference type="PANTHER" id="PTHR42806">
    <property type="entry name" value="GLYCINE CLEAVAGE SYSTEM P-PROTEIN"/>
    <property type="match status" value="1"/>
</dbReference>
<dbReference type="PANTHER" id="PTHR42806:SF1">
    <property type="entry name" value="GLYCINE DEHYDROGENASE (DECARBOXYLATING)"/>
    <property type="match status" value="1"/>
</dbReference>
<dbReference type="Pfam" id="PF02347">
    <property type="entry name" value="GDC-P"/>
    <property type="match status" value="1"/>
</dbReference>
<dbReference type="PIRSF" id="PIRSF006815">
    <property type="entry name" value="GcvPA"/>
    <property type="match status" value="1"/>
</dbReference>
<dbReference type="SUPFAM" id="SSF53383">
    <property type="entry name" value="PLP-dependent transferases"/>
    <property type="match status" value="1"/>
</dbReference>
<sequence>MKHRYLPATEQDKKEMLKAIGAETIDELFADIPENVRFQKDYQIKKAKSETELTRELTKLAAKNKDAVTYASFLGAGVYDHYQPVIVDHVISRSEFYTAYTPYQPEISQGELQAIFEFQTMICELTGMDIANSSMYDGGTALAEAAMLASGHTKKKKIVISAAVHPESRDVLKTYAKGQYIEVVEVPAKNGVTDLEALEHAVCDETAAVIVQYPNFFGQIEPLKDIEPLAHKGNSQLIVSSNPLALGILTPPGAYGADIVVGDAQPFGIPAAFGGPHCGYFAVTKKLMRKVPGRLVGQTEDENGRRGFVLTLQAREQHIRRDKATSNICSNQALNALAASAAMTALGKNGVKDMARQNILKADYARRQAEKAGLHVAFDGPIFNEFAVRLNLPVKEANRRLLQDGIIGGYDLGLAYPELNQHMLIAVTELRTKEKIDSLIARLGDQHE</sequence>
<gene>
    <name evidence="1" type="primary">gcvPA</name>
    <name type="ordered locus">RBAM_022880</name>
</gene>
<keyword id="KW-0560">Oxidoreductase</keyword>
<comment type="function">
    <text evidence="1">The glycine cleavage system catalyzes the degradation of glycine. The P protein binds the alpha-amino group of glycine through its pyridoxal phosphate cofactor; CO(2) is released and the remaining methylamine moiety is then transferred to the lipoamide cofactor of the H protein.</text>
</comment>
<comment type="catalytic activity">
    <reaction evidence="1">
        <text>N(6)-[(R)-lipoyl]-L-lysyl-[glycine-cleavage complex H protein] + glycine + H(+) = N(6)-[(R)-S(8)-aminomethyldihydrolipoyl]-L-lysyl-[glycine-cleavage complex H protein] + CO2</text>
        <dbReference type="Rhea" id="RHEA:24304"/>
        <dbReference type="Rhea" id="RHEA-COMP:10494"/>
        <dbReference type="Rhea" id="RHEA-COMP:10495"/>
        <dbReference type="ChEBI" id="CHEBI:15378"/>
        <dbReference type="ChEBI" id="CHEBI:16526"/>
        <dbReference type="ChEBI" id="CHEBI:57305"/>
        <dbReference type="ChEBI" id="CHEBI:83099"/>
        <dbReference type="ChEBI" id="CHEBI:83143"/>
        <dbReference type="EC" id="1.4.4.2"/>
    </reaction>
</comment>
<comment type="subunit">
    <text evidence="1">The glycine cleavage system is composed of four proteins: P, T, L and H. In this organism, the P 'protein' is a heterodimer of two subunits.</text>
</comment>
<comment type="similarity">
    <text evidence="1">Belongs to the GcvP family. N-terminal subunit subfamily.</text>
</comment>
<proteinExistence type="inferred from homology"/>
<name>GCSPA_BACVZ</name>
<accession>A7Z6M3</accession>
<reference key="1">
    <citation type="journal article" date="2007" name="Nat. Biotechnol.">
        <title>Comparative analysis of the complete genome sequence of the plant growth-promoting bacterium Bacillus amyloliquefaciens FZB42.</title>
        <authorList>
            <person name="Chen X.H."/>
            <person name="Koumoutsi A."/>
            <person name="Scholz R."/>
            <person name="Eisenreich A."/>
            <person name="Schneider K."/>
            <person name="Heinemeyer I."/>
            <person name="Morgenstern B."/>
            <person name="Voss B."/>
            <person name="Hess W.R."/>
            <person name="Reva O."/>
            <person name="Junge H."/>
            <person name="Voigt B."/>
            <person name="Jungblut P.R."/>
            <person name="Vater J."/>
            <person name="Suessmuth R."/>
            <person name="Liesegang H."/>
            <person name="Strittmatter A."/>
            <person name="Gottschalk G."/>
            <person name="Borriss R."/>
        </authorList>
    </citation>
    <scope>NUCLEOTIDE SEQUENCE [LARGE SCALE GENOMIC DNA]</scope>
    <source>
        <strain>DSM 23117 / BGSC 10A6 / LMG 26770 / FZB42</strain>
    </source>
</reference>
<organism>
    <name type="scientific">Bacillus velezensis (strain DSM 23117 / BGSC 10A6 / LMG 26770 / FZB42)</name>
    <name type="common">Bacillus amyloliquefaciens subsp. plantarum</name>
    <dbReference type="NCBI Taxonomy" id="326423"/>
    <lineage>
        <taxon>Bacteria</taxon>
        <taxon>Bacillati</taxon>
        <taxon>Bacillota</taxon>
        <taxon>Bacilli</taxon>
        <taxon>Bacillales</taxon>
        <taxon>Bacillaceae</taxon>
        <taxon>Bacillus</taxon>
        <taxon>Bacillus amyloliquefaciens group</taxon>
    </lineage>
</organism>